<organism>
    <name type="scientific">Campylobacter jejuni subsp. jejuni serotype O:2 (strain ATCC 700819 / NCTC 11168)</name>
    <dbReference type="NCBI Taxonomy" id="192222"/>
    <lineage>
        <taxon>Bacteria</taxon>
        <taxon>Pseudomonadati</taxon>
        <taxon>Campylobacterota</taxon>
        <taxon>Epsilonproteobacteria</taxon>
        <taxon>Campylobacterales</taxon>
        <taxon>Campylobacteraceae</taxon>
        <taxon>Campylobacter</taxon>
    </lineage>
</organism>
<gene>
    <name type="primary">ctb</name>
    <name type="ordered locus">Cj0465c</name>
</gene>
<accession>Q0PB48</accession>
<protein>
    <recommendedName>
        <fullName>Group 3 truncated hemoglobin ctb</fullName>
        <shortName>Cj-trHbP</shortName>
        <shortName>Truncated Hb</shortName>
    </recommendedName>
</protein>
<feature type="chain" id="PRO_0000393468" description="Group 3 truncated hemoglobin ctb">
    <location>
        <begin position="1"/>
        <end position="127"/>
    </location>
</feature>
<feature type="binding site">
    <location>
        <position position="64"/>
    </location>
    <ligand>
        <name>heme</name>
        <dbReference type="ChEBI" id="CHEBI:30413"/>
    </ligand>
</feature>
<feature type="binding site" description="proximal binding residue">
    <location>
        <position position="72"/>
    </location>
    <ligand>
        <name>heme</name>
        <dbReference type="ChEBI" id="CHEBI:30413"/>
    </ligand>
    <ligandPart>
        <name>Fe</name>
        <dbReference type="ChEBI" id="CHEBI:18248"/>
    </ligandPart>
</feature>
<feature type="mutagenesis site" description="Known as B10, reduces accessible space in the distal pocket, retarding ligand binding. Enlarges distal pocket, facilitating ligand entry; when associated with L-46." evidence="4">
    <original>Y</original>
    <variation>F</variation>
    <location>
        <position position="19"/>
    </location>
</feature>
<feature type="mutagenesis site" description="Known as E7, reduces accessible space in the distal pocket, retarding ligand binding. Enlarges distal pocket, facilitating ligand entry; when associated with F-19." evidence="4">
    <original>H</original>
    <variation>L</variation>
    <location>
        <position position="46"/>
    </location>
</feature>
<feature type="strand" evidence="7">
    <location>
        <begin position="3"/>
        <end position="5"/>
    </location>
</feature>
<feature type="helix" evidence="7">
    <location>
        <begin position="8"/>
        <end position="24"/>
    </location>
</feature>
<feature type="helix" evidence="7">
    <location>
        <begin position="28"/>
        <end position="36"/>
    </location>
</feature>
<feature type="helix" evidence="7">
    <location>
        <begin position="40"/>
        <end position="58"/>
    </location>
</feature>
<feature type="helix" evidence="7">
    <location>
        <begin position="68"/>
        <end position="73"/>
    </location>
</feature>
<feature type="helix" evidence="7">
    <location>
        <begin position="82"/>
        <end position="97"/>
    </location>
</feature>
<feature type="helix" evidence="7">
    <location>
        <begin position="100"/>
        <end position="121"/>
    </location>
</feature>
<keyword id="KW-0002">3D-structure</keyword>
<keyword id="KW-0963">Cytoplasm</keyword>
<keyword id="KW-0349">Heme</keyword>
<keyword id="KW-0408">Iron</keyword>
<keyword id="KW-0479">Metal-binding</keyword>
<keyword id="KW-1185">Reference proteome</keyword>
<keyword id="KW-0813">Transport</keyword>
<evidence type="ECO:0000269" key="1">
    <source>
    </source>
</evidence>
<evidence type="ECO:0000269" key="2">
    <source>
    </source>
</evidence>
<evidence type="ECO:0000269" key="3">
    <source>
    </source>
</evidence>
<evidence type="ECO:0000269" key="4">
    <source>
    </source>
</evidence>
<evidence type="ECO:0000305" key="5"/>
<evidence type="ECO:0000305" key="6">
    <source>
    </source>
</evidence>
<evidence type="ECO:0007829" key="7">
    <source>
        <dbReference type="PDB" id="2IG3"/>
    </source>
</evidence>
<dbReference type="EMBL" id="AL111168">
    <property type="protein sequence ID" value="CAL34613.1"/>
    <property type="molecule type" value="Genomic_DNA"/>
</dbReference>
<dbReference type="PIR" id="D81391">
    <property type="entry name" value="D81391"/>
</dbReference>
<dbReference type="RefSeq" id="WP_002858471.1">
    <property type="nucleotide sequence ID" value="NZ_SZUC01000002.1"/>
</dbReference>
<dbReference type="RefSeq" id="YP_002343899.1">
    <property type="nucleotide sequence ID" value="NC_002163.1"/>
</dbReference>
<dbReference type="PDB" id="2IG3">
    <property type="method" value="X-ray"/>
    <property type="resolution" value="2.15 A"/>
    <property type="chains" value="A/B=1-127"/>
</dbReference>
<dbReference type="PDBsum" id="2IG3"/>
<dbReference type="SMR" id="Q0PB48"/>
<dbReference type="IntAct" id="Q0PB48">
    <property type="interactions" value="54"/>
</dbReference>
<dbReference type="STRING" id="192222.Cj0465c"/>
<dbReference type="PaxDb" id="192222-Cj0465c"/>
<dbReference type="EnsemblBacteria" id="CAL34613">
    <property type="protein sequence ID" value="CAL34613"/>
    <property type="gene ID" value="Cj0465c"/>
</dbReference>
<dbReference type="GeneID" id="904788"/>
<dbReference type="KEGG" id="cje:Cj0465c"/>
<dbReference type="PATRIC" id="fig|192222.6.peg.457"/>
<dbReference type="eggNOG" id="COG2346">
    <property type="taxonomic scope" value="Bacteria"/>
</dbReference>
<dbReference type="HOGENOM" id="CLU_104957_4_0_7"/>
<dbReference type="OrthoDB" id="25954at2"/>
<dbReference type="EvolutionaryTrace" id="Q0PB48"/>
<dbReference type="Proteomes" id="UP000000799">
    <property type="component" value="Chromosome"/>
</dbReference>
<dbReference type="GO" id="GO:0005737">
    <property type="term" value="C:cytoplasm"/>
    <property type="evidence" value="ECO:0007669"/>
    <property type="project" value="UniProtKB-SubCell"/>
</dbReference>
<dbReference type="GO" id="GO:0020037">
    <property type="term" value="F:heme binding"/>
    <property type="evidence" value="ECO:0007669"/>
    <property type="project" value="InterPro"/>
</dbReference>
<dbReference type="GO" id="GO:0046872">
    <property type="term" value="F:metal ion binding"/>
    <property type="evidence" value="ECO:0007669"/>
    <property type="project" value="UniProtKB-KW"/>
</dbReference>
<dbReference type="GO" id="GO:0019825">
    <property type="term" value="F:oxygen binding"/>
    <property type="evidence" value="ECO:0007669"/>
    <property type="project" value="InterPro"/>
</dbReference>
<dbReference type="Gene3D" id="1.10.490.10">
    <property type="entry name" value="Globins"/>
    <property type="match status" value="1"/>
</dbReference>
<dbReference type="InterPro" id="IPR009050">
    <property type="entry name" value="Globin-like_sf"/>
</dbReference>
<dbReference type="InterPro" id="IPR012292">
    <property type="entry name" value="Globin/Proto"/>
</dbReference>
<dbReference type="InterPro" id="IPR001486">
    <property type="entry name" value="Hemoglobin_trunc"/>
</dbReference>
<dbReference type="Pfam" id="PF01152">
    <property type="entry name" value="Bac_globin"/>
    <property type="match status" value="1"/>
</dbReference>
<dbReference type="SUPFAM" id="SSF46458">
    <property type="entry name" value="Globin-like"/>
    <property type="match status" value="1"/>
</dbReference>
<comment type="function">
    <text>Has been suggested to be involved in cytochrome c peroxidase or P450-like oxygen chemistry or cyanide detoxification. The high oxygen affinity of this protein suggests that it probably does not function as an oxygen transporter.</text>
</comment>
<comment type="cofactor">
    <cofactor>
        <name>heme</name>
        <dbReference type="ChEBI" id="CHEBI:30413"/>
    </cofactor>
    <text>Binds 1 heme group per subunit; upon expression in E.coli it purifies predominantly in the Fe(2+)-oxy form, binding O(2) tightly even under anaerobic conditions.</text>
</comment>
<comment type="subunit">
    <text evidence="2 3">Monomer.</text>
</comment>
<comment type="subcellular location">
    <subcellularLocation>
        <location evidence="6">Cytoplasm</location>
    </subcellularLocation>
</comment>
<comment type="induction">
    <text evidence="1">Constitutively expressed, it is further induced by S-nitrosoglutathione (GSNO) and S-nitroso-N-acetylpenicillamine (SNAP) (at protein level).</text>
</comment>
<comment type="disruption phenotype">
    <text evidence="1">Cells lacking this gene grow less well than wild-type under conditions of high aeration.</text>
</comment>
<comment type="similarity">
    <text evidence="5">Belongs to the truncated hemoglobin family. Group III subfamily.</text>
</comment>
<name>TRHBP_CAMJE</name>
<proteinExistence type="evidence at protein level"/>
<sequence>MKFETINQESIAKLMEIFYEKVRKDKDLGPIFNNAIGTSDEEWKEHKAKIGNFWAGMLLGEGDYNGQPLKKHLDLPPFPQEFFEIWLKLFEESLNIVYNEEMKNVILQRAQMIASHFQNMLYKYGGH</sequence>
<reference key="1">
    <citation type="journal article" date="2000" name="Nature">
        <title>The genome sequence of the food-borne pathogen Campylobacter jejuni reveals hypervariable sequences.</title>
        <authorList>
            <person name="Parkhill J."/>
            <person name="Wren B.W."/>
            <person name="Mungall K.L."/>
            <person name="Ketley J.M."/>
            <person name="Churcher C.M."/>
            <person name="Basham D."/>
            <person name="Chillingworth T."/>
            <person name="Davies R.M."/>
            <person name="Feltwell T."/>
            <person name="Holroyd S."/>
            <person name="Jagels K."/>
            <person name="Karlyshev A.V."/>
            <person name="Moule S."/>
            <person name="Pallen M.J."/>
            <person name="Penn C.W."/>
            <person name="Quail M.A."/>
            <person name="Rajandream M.A."/>
            <person name="Rutherford K.M."/>
            <person name="van Vliet A.H.M."/>
            <person name="Whitehead S."/>
            <person name="Barrell B.G."/>
        </authorList>
    </citation>
    <scope>NUCLEOTIDE SEQUENCE [LARGE SCALE GENOMIC DNA]</scope>
    <source>
        <strain>ATCC 700819 / NCTC 11168</strain>
    </source>
</reference>
<reference key="2">
    <citation type="journal article" date="2005" name="Microbiology">
        <title>A truncated haemoglobin implicated in oxygen metabolism by the microaerophilic food-borne pathogen Campylobacter jejuni.</title>
        <authorList>
            <person name="Wainwright L.M."/>
            <person name="Elvers K.T."/>
            <person name="Park S.F."/>
            <person name="Poole R.K."/>
        </authorList>
    </citation>
    <scope>POSSIBLE FUNCTION</scope>
    <scope>SUBCELLULAR LOCATION</scope>
    <scope>INDUCTION</scope>
    <scope>DISRUPTION PHENOTYPE</scope>
    <source>
        <strain>ATCC 700819 / NCTC 11168</strain>
    </source>
</reference>
<reference key="3">
    <citation type="journal article" date="2006" name="Biochemistry">
        <title>Purification and spectroscopic characterization of Ctb, a group III truncated hemoglobin implicated in oxygen metabolism in the food-borne pathogen Campylobacter jejuni.</title>
        <authorList>
            <person name="Wainwright L.M."/>
            <person name="Wang Y."/>
            <person name="Park S.F."/>
            <person name="Yeh S.R."/>
            <person name="Poole R.K."/>
        </authorList>
    </citation>
    <scope>CHARACTERIZATION</scope>
    <scope>HEME COFACTOR</scope>
    <scope>SUBUNIT</scope>
    <source>
        <strain>ATCC 700819 / NCTC 11168</strain>
    </source>
</reference>
<reference key="4">
    <citation type="journal article" date="2007" name="J. Biol. Chem.">
        <title>Structural and functional properties of a truncated hemoglobin from a food-borne pathogen Campylobacter jejuni.</title>
        <authorList>
            <person name="Lu C."/>
            <person name="Egawa T."/>
            <person name="Wainwright L.M."/>
            <person name="Poole R.K."/>
            <person name="Yeh S.R."/>
        </authorList>
    </citation>
    <scope>POSSIBLE FUNCTION IN O(2) CHEMISTRY</scope>
    <scope>MUTAGENESIS OF TYR-19 AND HIS-46</scope>
    <source>
        <strain>ATCC 700819 / NCTC 11168</strain>
    </source>
</reference>
<reference key="5">
    <citation type="journal article" date="2008" name="FEBS J.">
        <title>Ferrous Campylobacter jejuni truncated hemoglobin P displays an extremely high reactivity for cyanide - a comparative study.</title>
        <authorList>
            <person name="Bolli A."/>
            <person name="Ciaccio C."/>
            <person name="Coletta M."/>
            <person name="Nardini M."/>
            <person name="Bolognesi M."/>
            <person name="Pesce A."/>
            <person name="Guertin M."/>
            <person name="Visca P."/>
            <person name="Ascenzi P."/>
        </authorList>
    </citation>
    <scope>POSSIBLE FUNCTION IN CYANIDE DETOXIFICATION</scope>
    <source>
        <strain>ATCC 700819 / NCTC 11168</strain>
    </source>
</reference>
<reference key="6">
    <citation type="journal article" date="2006" name="J. Biol. Chem.">
        <title>Structural determinants in the group III truncated hemoglobin from Campylobacter jejuni.</title>
        <authorList>
            <person name="Nardini M."/>
            <person name="Pesce A."/>
            <person name="Labarre M."/>
            <person name="Richard C."/>
            <person name="Bolli A."/>
            <person name="Ascenzi P."/>
            <person name="Guertin M."/>
            <person name="Bolognesi M."/>
        </authorList>
    </citation>
    <scope>X-RAY CRYSTALLOGRAPHY (2.15 ANGSTROMS) OF THE CYANO-MET FORM</scope>
    <scope>HEME COFACTOR</scope>
    <scope>SUBUNIT</scope>
    <source>
        <strain>ATCC 700819 / NCTC 11168</strain>
    </source>
</reference>